<reference key="1">
    <citation type="submission" date="2008-06" db="EMBL/GenBank/DDBJ databases">
        <title>Complete sequence of Pelodictyon phaeoclathratiforme BU-1.</title>
        <authorList>
            <consortium name="US DOE Joint Genome Institute"/>
            <person name="Lucas S."/>
            <person name="Copeland A."/>
            <person name="Lapidus A."/>
            <person name="Glavina del Rio T."/>
            <person name="Dalin E."/>
            <person name="Tice H."/>
            <person name="Bruce D."/>
            <person name="Goodwin L."/>
            <person name="Pitluck S."/>
            <person name="Schmutz J."/>
            <person name="Larimer F."/>
            <person name="Land M."/>
            <person name="Hauser L."/>
            <person name="Kyrpides N."/>
            <person name="Mikhailova N."/>
            <person name="Liu Z."/>
            <person name="Li T."/>
            <person name="Zhao F."/>
            <person name="Overmann J."/>
            <person name="Bryant D.A."/>
            <person name="Richardson P."/>
        </authorList>
    </citation>
    <scope>NUCLEOTIDE SEQUENCE [LARGE SCALE GENOMIC DNA]</scope>
    <source>
        <strain>DSM 5477 / BU-1</strain>
    </source>
</reference>
<dbReference type="EMBL" id="CP001110">
    <property type="protein sequence ID" value="ACF42641.1"/>
    <property type="molecule type" value="Genomic_DNA"/>
</dbReference>
<dbReference type="RefSeq" id="WP_012507137.1">
    <property type="nucleotide sequence ID" value="NC_011060.1"/>
</dbReference>
<dbReference type="SMR" id="B4SBW6"/>
<dbReference type="STRING" id="324925.Ppha_0308"/>
<dbReference type="KEGG" id="pph:Ppha_0308"/>
<dbReference type="eggNOG" id="COG0200">
    <property type="taxonomic scope" value="Bacteria"/>
</dbReference>
<dbReference type="HOGENOM" id="CLU_055188_4_0_10"/>
<dbReference type="OrthoDB" id="9810293at2"/>
<dbReference type="Proteomes" id="UP000002724">
    <property type="component" value="Chromosome"/>
</dbReference>
<dbReference type="GO" id="GO:0022625">
    <property type="term" value="C:cytosolic large ribosomal subunit"/>
    <property type="evidence" value="ECO:0007669"/>
    <property type="project" value="TreeGrafter"/>
</dbReference>
<dbReference type="GO" id="GO:0019843">
    <property type="term" value="F:rRNA binding"/>
    <property type="evidence" value="ECO:0007669"/>
    <property type="project" value="UniProtKB-UniRule"/>
</dbReference>
<dbReference type="GO" id="GO:0003735">
    <property type="term" value="F:structural constituent of ribosome"/>
    <property type="evidence" value="ECO:0007669"/>
    <property type="project" value="InterPro"/>
</dbReference>
<dbReference type="GO" id="GO:0006412">
    <property type="term" value="P:translation"/>
    <property type="evidence" value="ECO:0007669"/>
    <property type="project" value="UniProtKB-UniRule"/>
</dbReference>
<dbReference type="Gene3D" id="3.100.10.10">
    <property type="match status" value="1"/>
</dbReference>
<dbReference type="HAMAP" id="MF_01341">
    <property type="entry name" value="Ribosomal_uL15"/>
    <property type="match status" value="1"/>
</dbReference>
<dbReference type="InterPro" id="IPR030878">
    <property type="entry name" value="Ribosomal_uL15"/>
</dbReference>
<dbReference type="InterPro" id="IPR021131">
    <property type="entry name" value="Ribosomal_uL15/eL18"/>
</dbReference>
<dbReference type="InterPro" id="IPR036227">
    <property type="entry name" value="Ribosomal_uL15/eL18_sf"/>
</dbReference>
<dbReference type="InterPro" id="IPR005749">
    <property type="entry name" value="Ribosomal_uL15_bac-type"/>
</dbReference>
<dbReference type="InterPro" id="IPR001196">
    <property type="entry name" value="Ribosomal_uL15_CS"/>
</dbReference>
<dbReference type="NCBIfam" id="TIGR01071">
    <property type="entry name" value="rplO_bact"/>
    <property type="match status" value="1"/>
</dbReference>
<dbReference type="PANTHER" id="PTHR12934">
    <property type="entry name" value="50S RIBOSOMAL PROTEIN L15"/>
    <property type="match status" value="1"/>
</dbReference>
<dbReference type="PANTHER" id="PTHR12934:SF11">
    <property type="entry name" value="LARGE RIBOSOMAL SUBUNIT PROTEIN UL15M"/>
    <property type="match status" value="1"/>
</dbReference>
<dbReference type="Pfam" id="PF00828">
    <property type="entry name" value="Ribosomal_L27A"/>
    <property type="match status" value="1"/>
</dbReference>
<dbReference type="SUPFAM" id="SSF52080">
    <property type="entry name" value="Ribosomal proteins L15p and L18e"/>
    <property type="match status" value="1"/>
</dbReference>
<dbReference type="PROSITE" id="PS00475">
    <property type="entry name" value="RIBOSOMAL_L15"/>
    <property type="match status" value="1"/>
</dbReference>
<keyword id="KW-1185">Reference proteome</keyword>
<keyword id="KW-0687">Ribonucleoprotein</keyword>
<keyword id="KW-0689">Ribosomal protein</keyword>
<keyword id="KW-0694">RNA-binding</keyword>
<keyword id="KW-0699">rRNA-binding</keyword>
<evidence type="ECO:0000255" key="1">
    <source>
        <dbReference type="HAMAP-Rule" id="MF_01341"/>
    </source>
</evidence>
<evidence type="ECO:0000256" key="2">
    <source>
        <dbReference type="SAM" id="MobiDB-lite"/>
    </source>
</evidence>
<evidence type="ECO:0000305" key="3"/>
<sequence length="184" mass="19898">MDLSSLRPAKGAVKNKKRVGRGQGSGNGTTAGKGNNGQQSRSGYKRPIIEGGQVPVYRRLPKFGFTPLDKKPVNTVNLTQIDKWIQDGLVENEITILDLKSLLHASNADYFKILGNGELTSAITITAHAFSKSAEEKIAAAGGTVVKAFRTLEEASKVRDLPFEEALLKPKAKLVKRAKKSTKP</sequence>
<proteinExistence type="inferred from homology"/>
<comment type="function">
    <text evidence="1">Binds to the 23S rRNA.</text>
</comment>
<comment type="subunit">
    <text evidence="1">Part of the 50S ribosomal subunit.</text>
</comment>
<comment type="similarity">
    <text evidence="1">Belongs to the universal ribosomal protein uL15 family.</text>
</comment>
<gene>
    <name evidence="1" type="primary">rplO</name>
    <name type="ordered locus">Ppha_0308</name>
</gene>
<name>RL15_PELPB</name>
<accession>B4SBW6</accession>
<organism>
    <name type="scientific">Pelodictyon phaeoclathratiforme (strain DSM 5477 / BU-1)</name>
    <dbReference type="NCBI Taxonomy" id="324925"/>
    <lineage>
        <taxon>Bacteria</taxon>
        <taxon>Pseudomonadati</taxon>
        <taxon>Chlorobiota</taxon>
        <taxon>Chlorobiia</taxon>
        <taxon>Chlorobiales</taxon>
        <taxon>Chlorobiaceae</taxon>
        <taxon>Chlorobium/Pelodictyon group</taxon>
        <taxon>Pelodictyon</taxon>
    </lineage>
</organism>
<protein>
    <recommendedName>
        <fullName evidence="1">Large ribosomal subunit protein uL15</fullName>
    </recommendedName>
    <alternativeName>
        <fullName evidence="3">50S ribosomal protein L15</fullName>
    </alternativeName>
</protein>
<feature type="chain" id="PRO_1000142854" description="Large ribosomal subunit protein uL15">
    <location>
        <begin position="1"/>
        <end position="184"/>
    </location>
</feature>
<feature type="region of interest" description="Disordered" evidence="2">
    <location>
        <begin position="1"/>
        <end position="45"/>
    </location>
</feature>
<feature type="compositionally biased region" description="Gly residues" evidence="2">
    <location>
        <begin position="21"/>
        <end position="35"/>
    </location>
</feature>